<sequence>MINIVSLVCIYINSVPYSSIFFLDKLPEAYAFLNPIVDIMPVIPLFFFLLAFVWQAAVSFR</sequence>
<comment type="function">
    <text evidence="1">One of the components of the core complex of photosystem II (PSII). PSII is a light-driven water:plastoquinone oxidoreductase that uses light energy to abstract electrons from H(2)O, generating O(2) and a proton gradient subsequently used for ATP formation. It consists of a core antenna complex that captures photons, and an electron transfer chain that converts photonic excitation into a charge separation.</text>
</comment>
<comment type="subunit">
    <text evidence="1">PSII is composed of 1 copy each of membrane proteins PsbA, PsbB, PsbC, PsbD, PsbE, PsbF, PsbH, PsbI, PsbJ, PsbK, PsbL, PsbM, PsbT, PsbX, PsbY, PsbZ, Psb30/Ycf12, at least 3 peripheral proteins of the oxygen-evolving complex and a large number of cofactors. It forms dimeric complexes.</text>
</comment>
<comment type="subcellular location">
    <subcellularLocation>
        <location evidence="1">Plastid</location>
        <location evidence="1">Chloroplast thylakoid membrane</location>
        <topology evidence="1">Single-pass membrane protein</topology>
    </subcellularLocation>
</comment>
<comment type="similarity">
    <text evidence="1">Belongs to the PsbK family.</text>
</comment>
<reference key="1">
    <citation type="journal article" date="2000" name="DNA Res.">
        <title>Complete structure of the chloroplast genome of a legume, Lotus japonicus.</title>
        <authorList>
            <person name="Kato T."/>
            <person name="Kaneko T."/>
            <person name="Sato S."/>
            <person name="Nakamura Y."/>
            <person name="Tabata S."/>
        </authorList>
    </citation>
    <scope>NUCLEOTIDE SEQUENCE [LARGE SCALE GENOMIC DNA]</scope>
    <source>
        <strain>cv. Miyakojima MG-20</strain>
    </source>
</reference>
<geneLocation type="chloroplast"/>
<evidence type="ECO:0000255" key="1">
    <source>
        <dbReference type="HAMAP-Rule" id="MF_00441"/>
    </source>
</evidence>
<accession>Q9BBS2</accession>
<dbReference type="EMBL" id="AP002983">
    <property type="protein sequence ID" value="BAB33203.1"/>
    <property type="molecule type" value="Genomic_DNA"/>
</dbReference>
<dbReference type="RefSeq" id="NP_084805.1">
    <property type="nucleotide sequence ID" value="NC_002694.1"/>
</dbReference>
<dbReference type="SMR" id="Q9BBS2"/>
<dbReference type="GeneID" id="802926"/>
<dbReference type="OMA" id="CIYINSV"/>
<dbReference type="GO" id="GO:0009535">
    <property type="term" value="C:chloroplast thylakoid membrane"/>
    <property type="evidence" value="ECO:0007669"/>
    <property type="project" value="UniProtKB-SubCell"/>
</dbReference>
<dbReference type="GO" id="GO:0009539">
    <property type="term" value="C:photosystem II reaction center"/>
    <property type="evidence" value="ECO:0007669"/>
    <property type="project" value="InterPro"/>
</dbReference>
<dbReference type="GO" id="GO:0015979">
    <property type="term" value="P:photosynthesis"/>
    <property type="evidence" value="ECO:0007669"/>
    <property type="project" value="UniProtKB-UniRule"/>
</dbReference>
<dbReference type="HAMAP" id="MF_00441">
    <property type="entry name" value="PSII_PsbK"/>
    <property type="match status" value="1"/>
</dbReference>
<dbReference type="InterPro" id="IPR003687">
    <property type="entry name" value="PSII_PsbK"/>
</dbReference>
<dbReference type="InterPro" id="IPR037270">
    <property type="entry name" value="PSII_PsbK_sf"/>
</dbReference>
<dbReference type="NCBIfam" id="NF002715">
    <property type="entry name" value="PRK02553.1"/>
    <property type="match status" value="1"/>
</dbReference>
<dbReference type="PANTHER" id="PTHR35325">
    <property type="match status" value="1"/>
</dbReference>
<dbReference type="PANTHER" id="PTHR35325:SF1">
    <property type="entry name" value="PHOTOSYSTEM II REACTION CENTER PROTEIN K"/>
    <property type="match status" value="1"/>
</dbReference>
<dbReference type="Pfam" id="PF02533">
    <property type="entry name" value="PsbK"/>
    <property type="match status" value="1"/>
</dbReference>
<dbReference type="SUPFAM" id="SSF161037">
    <property type="entry name" value="Photosystem II reaction center protein K, PsbK"/>
    <property type="match status" value="1"/>
</dbReference>
<name>PSBK_LOTJA</name>
<gene>
    <name evidence="1" type="primary">psbK</name>
</gene>
<organism>
    <name type="scientific">Lotus japonicus</name>
    <name type="common">Lotus corniculatus var. japonicus</name>
    <dbReference type="NCBI Taxonomy" id="34305"/>
    <lineage>
        <taxon>Eukaryota</taxon>
        <taxon>Viridiplantae</taxon>
        <taxon>Streptophyta</taxon>
        <taxon>Embryophyta</taxon>
        <taxon>Tracheophyta</taxon>
        <taxon>Spermatophyta</taxon>
        <taxon>Magnoliopsida</taxon>
        <taxon>eudicotyledons</taxon>
        <taxon>Gunneridae</taxon>
        <taxon>Pentapetalae</taxon>
        <taxon>rosids</taxon>
        <taxon>fabids</taxon>
        <taxon>Fabales</taxon>
        <taxon>Fabaceae</taxon>
        <taxon>Papilionoideae</taxon>
        <taxon>50 kb inversion clade</taxon>
        <taxon>NPAAA clade</taxon>
        <taxon>Hologalegina</taxon>
        <taxon>robinioid clade</taxon>
        <taxon>Loteae</taxon>
        <taxon>Lotus</taxon>
    </lineage>
</organism>
<feature type="propeptide" id="PRO_0000029483" evidence="1">
    <location>
        <begin position="1"/>
        <end position="24"/>
    </location>
</feature>
<feature type="chain" id="PRO_0000029484" description="Photosystem II reaction center protein K" evidence="1">
    <location>
        <begin position="25"/>
        <end position="61"/>
    </location>
</feature>
<feature type="transmembrane region" description="Helical" evidence="1">
    <location>
        <begin position="36"/>
        <end position="56"/>
    </location>
</feature>
<protein>
    <recommendedName>
        <fullName evidence="1">Photosystem II reaction center protein K</fullName>
        <shortName evidence="1">PSII-K</shortName>
    </recommendedName>
</protein>
<keyword id="KW-0150">Chloroplast</keyword>
<keyword id="KW-0472">Membrane</keyword>
<keyword id="KW-0602">Photosynthesis</keyword>
<keyword id="KW-0604">Photosystem II</keyword>
<keyword id="KW-0934">Plastid</keyword>
<keyword id="KW-0674">Reaction center</keyword>
<keyword id="KW-0793">Thylakoid</keyword>
<keyword id="KW-0812">Transmembrane</keyword>
<keyword id="KW-1133">Transmembrane helix</keyword>
<proteinExistence type="inferred from homology"/>